<reference key="1">
    <citation type="journal article" date="2007" name="Genome Biol.">
        <title>Characterization and modeling of the Haemophilus influenzae core and supragenomes based on the complete genomic sequences of Rd and 12 clinical nontypeable strains.</title>
        <authorList>
            <person name="Hogg J.S."/>
            <person name="Hu F.Z."/>
            <person name="Janto B."/>
            <person name="Boissy R."/>
            <person name="Hayes J."/>
            <person name="Keefe R."/>
            <person name="Post J.C."/>
            <person name="Ehrlich G.D."/>
        </authorList>
    </citation>
    <scope>NUCLEOTIDE SEQUENCE [LARGE SCALE GENOMIC DNA]</scope>
    <source>
        <strain>PittGG</strain>
    </source>
</reference>
<accession>A5UFP3</accession>
<proteinExistence type="inferred from homology"/>
<comment type="catalytic activity">
    <reaction evidence="1">
        <text>tRNA(Cys) + L-cysteine + ATP = L-cysteinyl-tRNA(Cys) + AMP + diphosphate</text>
        <dbReference type="Rhea" id="RHEA:17773"/>
        <dbReference type="Rhea" id="RHEA-COMP:9661"/>
        <dbReference type="Rhea" id="RHEA-COMP:9679"/>
        <dbReference type="ChEBI" id="CHEBI:30616"/>
        <dbReference type="ChEBI" id="CHEBI:33019"/>
        <dbReference type="ChEBI" id="CHEBI:35235"/>
        <dbReference type="ChEBI" id="CHEBI:78442"/>
        <dbReference type="ChEBI" id="CHEBI:78517"/>
        <dbReference type="ChEBI" id="CHEBI:456215"/>
        <dbReference type="EC" id="6.1.1.16"/>
    </reaction>
</comment>
<comment type="cofactor">
    <cofactor evidence="1">
        <name>Zn(2+)</name>
        <dbReference type="ChEBI" id="CHEBI:29105"/>
    </cofactor>
    <text evidence="1">Binds 1 zinc ion per subunit.</text>
</comment>
<comment type="subunit">
    <text evidence="1">Monomer.</text>
</comment>
<comment type="subcellular location">
    <subcellularLocation>
        <location evidence="1">Cytoplasm</location>
    </subcellularLocation>
</comment>
<comment type="similarity">
    <text evidence="1">Belongs to the class-I aminoacyl-tRNA synthetase family.</text>
</comment>
<sequence length="459" mass="52409">MLKIFNTLTREKEIFKPIHENKVGMYVCGVTVYDLCHIGHGRTFVCFDVIARYLRSLGYDLTYVRNITDVDDKIIKRALENKETCDQLVDRMVQEMYKDFDALNVLRPDFEPRATHHIPEIIEIVEKLIKRGHAYVADNGDVMFDVESFKEYGKLSRQDLEQLQAGARIEINEIKKNPMDFVLWKMSKENEPSWSSPWGAGRPGWHIECSAMNCKQLGEHFDIHGGGSDLMFPHHENEIAQSCCAHGGQYVNYWIHSGMIMVDKEKMSKSLGNFFTIRDVLNHYNAEAVRYFLLTAHYRSQLNYSEENLNLAQGALERLYTALRGADQSAVVFGGENFVETFREAMDDDFNTPNALSVLFEMAREINKLKTEDVEKANGLAARLRELGAILGLLQQDPEKFLQAGSDDDEVAKIEVLIKQRNEARAAKDWPVADAARNELTAMGIVLEDGPNGTTWRKQ</sequence>
<gene>
    <name evidence="1" type="primary">cysS</name>
    <name type="ordered locus">CGSHiGG_02930</name>
</gene>
<evidence type="ECO:0000255" key="1">
    <source>
        <dbReference type="HAMAP-Rule" id="MF_00041"/>
    </source>
</evidence>
<protein>
    <recommendedName>
        <fullName evidence="1">Cysteine--tRNA ligase</fullName>
        <ecNumber evidence="1">6.1.1.16</ecNumber>
    </recommendedName>
    <alternativeName>
        <fullName evidence="1">Cysteinyl-tRNA synthetase</fullName>
        <shortName evidence="1">CysRS</shortName>
    </alternativeName>
</protein>
<dbReference type="EC" id="6.1.1.16" evidence="1"/>
<dbReference type="EMBL" id="CP000672">
    <property type="protein sequence ID" value="ABQ99598.1"/>
    <property type="molecule type" value="Genomic_DNA"/>
</dbReference>
<dbReference type="SMR" id="A5UFP3"/>
<dbReference type="KEGG" id="hiq:CGSHiGG_02930"/>
<dbReference type="HOGENOM" id="CLU_013528_0_1_6"/>
<dbReference type="Proteomes" id="UP000001990">
    <property type="component" value="Chromosome"/>
</dbReference>
<dbReference type="GO" id="GO:0005829">
    <property type="term" value="C:cytosol"/>
    <property type="evidence" value="ECO:0007669"/>
    <property type="project" value="TreeGrafter"/>
</dbReference>
<dbReference type="GO" id="GO:0005524">
    <property type="term" value="F:ATP binding"/>
    <property type="evidence" value="ECO:0007669"/>
    <property type="project" value="UniProtKB-UniRule"/>
</dbReference>
<dbReference type="GO" id="GO:0004817">
    <property type="term" value="F:cysteine-tRNA ligase activity"/>
    <property type="evidence" value="ECO:0007669"/>
    <property type="project" value="UniProtKB-UniRule"/>
</dbReference>
<dbReference type="GO" id="GO:0008270">
    <property type="term" value="F:zinc ion binding"/>
    <property type="evidence" value="ECO:0007669"/>
    <property type="project" value="UniProtKB-UniRule"/>
</dbReference>
<dbReference type="GO" id="GO:0006423">
    <property type="term" value="P:cysteinyl-tRNA aminoacylation"/>
    <property type="evidence" value="ECO:0007669"/>
    <property type="project" value="UniProtKB-UniRule"/>
</dbReference>
<dbReference type="CDD" id="cd07963">
    <property type="entry name" value="Anticodon_Ia_Cys"/>
    <property type="match status" value="1"/>
</dbReference>
<dbReference type="CDD" id="cd00672">
    <property type="entry name" value="CysRS_core"/>
    <property type="match status" value="1"/>
</dbReference>
<dbReference type="FunFam" id="1.20.120.1910:FF:000001">
    <property type="entry name" value="Cysteine--tRNA ligase"/>
    <property type="match status" value="1"/>
</dbReference>
<dbReference type="FunFam" id="3.40.50.620:FF:000009">
    <property type="entry name" value="Cysteine--tRNA ligase"/>
    <property type="match status" value="1"/>
</dbReference>
<dbReference type="Gene3D" id="1.20.120.1910">
    <property type="entry name" value="Cysteine-tRNA ligase, C-terminal anti-codon recognition domain"/>
    <property type="match status" value="1"/>
</dbReference>
<dbReference type="Gene3D" id="3.40.50.620">
    <property type="entry name" value="HUPs"/>
    <property type="match status" value="1"/>
</dbReference>
<dbReference type="HAMAP" id="MF_00041">
    <property type="entry name" value="Cys_tRNA_synth"/>
    <property type="match status" value="1"/>
</dbReference>
<dbReference type="InterPro" id="IPR015803">
    <property type="entry name" value="Cys-tRNA-ligase"/>
</dbReference>
<dbReference type="InterPro" id="IPR015273">
    <property type="entry name" value="Cys-tRNA-synt_Ia_DALR"/>
</dbReference>
<dbReference type="InterPro" id="IPR024909">
    <property type="entry name" value="Cys-tRNA/MSH_ligase"/>
</dbReference>
<dbReference type="InterPro" id="IPR056411">
    <property type="entry name" value="CysS_C"/>
</dbReference>
<dbReference type="InterPro" id="IPR014729">
    <property type="entry name" value="Rossmann-like_a/b/a_fold"/>
</dbReference>
<dbReference type="InterPro" id="IPR032678">
    <property type="entry name" value="tRNA-synt_1_cat_dom"/>
</dbReference>
<dbReference type="InterPro" id="IPR009080">
    <property type="entry name" value="tRNAsynth_Ia_anticodon-bd"/>
</dbReference>
<dbReference type="NCBIfam" id="TIGR00435">
    <property type="entry name" value="cysS"/>
    <property type="match status" value="1"/>
</dbReference>
<dbReference type="PANTHER" id="PTHR10890:SF3">
    <property type="entry name" value="CYSTEINE--TRNA LIGASE, CYTOPLASMIC"/>
    <property type="match status" value="1"/>
</dbReference>
<dbReference type="PANTHER" id="PTHR10890">
    <property type="entry name" value="CYSTEINYL-TRNA SYNTHETASE"/>
    <property type="match status" value="1"/>
</dbReference>
<dbReference type="Pfam" id="PF23493">
    <property type="entry name" value="CysS_C"/>
    <property type="match status" value="1"/>
</dbReference>
<dbReference type="Pfam" id="PF09190">
    <property type="entry name" value="DALR_2"/>
    <property type="match status" value="1"/>
</dbReference>
<dbReference type="Pfam" id="PF01406">
    <property type="entry name" value="tRNA-synt_1e"/>
    <property type="match status" value="1"/>
</dbReference>
<dbReference type="PRINTS" id="PR00983">
    <property type="entry name" value="TRNASYNTHCYS"/>
</dbReference>
<dbReference type="SMART" id="SM00840">
    <property type="entry name" value="DALR_2"/>
    <property type="match status" value="1"/>
</dbReference>
<dbReference type="SUPFAM" id="SSF47323">
    <property type="entry name" value="Anticodon-binding domain of a subclass of class I aminoacyl-tRNA synthetases"/>
    <property type="match status" value="1"/>
</dbReference>
<dbReference type="SUPFAM" id="SSF52374">
    <property type="entry name" value="Nucleotidylyl transferase"/>
    <property type="match status" value="1"/>
</dbReference>
<name>SYC_HAEIG</name>
<feature type="chain" id="PRO_0000332833" description="Cysteine--tRNA ligase">
    <location>
        <begin position="1"/>
        <end position="459"/>
    </location>
</feature>
<feature type="short sequence motif" description="'HIGH' region">
    <location>
        <begin position="30"/>
        <end position="40"/>
    </location>
</feature>
<feature type="short sequence motif" description="'KMSKS' region">
    <location>
        <begin position="266"/>
        <end position="270"/>
    </location>
</feature>
<feature type="binding site" evidence="1">
    <location>
        <position position="28"/>
    </location>
    <ligand>
        <name>Zn(2+)</name>
        <dbReference type="ChEBI" id="CHEBI:29105"/>
    </ligand>
</feature>
<feature type="binding site" evidence="1">
    <location>
        <position position="209"/>
    </location>
    <ligand>
        <name>Zn(2+)</name>
        <dbReference type="ChEBI" id="CHEBI:29105"/>
    </ligand>
</feature>
<feature type="binding site" evidence="1">
    <location>
        <position position="234"/>
    </location>
    <ligand>
        <name>Zn(2+)</name>
        <dbReference type="ChEBI" id="CHEBI:29105"/>
    </ligand>
</feature>
<feature type="binding site" evidence="1">
    <location>
        <position position="238"/>
    </location>
    <ligand>
        <name>Zn(2+)</name>
        <dbReference type="ChEBI" id="CHEBI:29105"/>
    </ligand>
</feature>
<feature type="binding site" evidence="1">
    <location>
        <position position="269"/>
    </location>
    <ligand>
        <name>ATP</name>
        <dbReference type="ChEBI" id="CHEBI:30616"/>
    </ligand>
</feature>
<organism>
    <name type="scientific">Haemophilus influenzae (strain PittGG)</name>
    <dbReference type="NCBI Taxonomy" id="374931"/>
    <lineage>
        <taxon>Bacteria</taxon>
        <taxon>Pseudomonadati</taxon>
        <taxon>Pseudomonadota</taxon>
        <taxon>Gammaproteobacteria</taxon>
        <taxon>Pasteurellales</taxon>
        <taxon>Pasteurellaceae</taxon>
        <taxon>Haemophilus</taxon>
    </lineage>
</organism>
<keyword id="KW-0030">Aminoacyl-tRNA synthetase</keyword>
<keyword id="KW-0067">ATP-binding</keyword>
<keyword id="KW-0963">Cytoplasm</keyword>
<keyword id="KW-0436">Ligase</keyword>
<keyword id="KW-0479">Metal-binding</keyword>
<keyword id="KW-0547">Nucleotide-binding</keyword>
<keyword id="KW-0648">Protein biosynthesis</keyword>
<keyword id="KW-0862">Zinc</keyword>